<accession>Q1QDC9</accession>
<protein>
    <recommendedName>
        <fullName evidence="1">Chaperonin GroEL</fullName>
        <ecNumber evidence="1">5.6.1.7</ecNumber>
    </recommendedName>
    <alternativeName>
        <fullName evidence="1">60 kDa chaperonin</fullName>
    </alternativeName>
    <alternativeName>
        <fullName evidence="1">Chaperonin-60</fullName>
        <shortName evidence="1">Cpn60</shortName>
    </alternativeName>
</protein>
<dbReference type="EC" id="5.6.1.7" evidence="1"/>
<dbReference type="EMBL" id="CP000323">
    <property type="protein sequence ID" value="ABE74324.1"/>
    <property type="molecule type" value="Genomic_DNA"/>
</dbReference>
<dbReference type="RefSeq" id="WP_011512893.1">
    <property type="nucleotide sequence ID" value="NC_007969.1"/>
</dbReference>
<dbReference type="SMR" id="Q1QDC9"/>
<dbReference type="STRING" id="335284.Pcryo_0541"/>
<dbReference type="KEGG" id="pcr:Pcryo_0541"/>
<dbReference type="eggNOG" id="COG0459">
    <property type="taxonomic scope" value="Bacteria"/>
</dbReference>
<dbReference type="HOGENOM" id="CLU_016503_3_0_6"/>
<dbReference type="Proteomes" id="UP000002425">
    <property type="component" value="Chromosome"/>
</dbReference>
<dbReference type="GO" id="GO:0005737">
    <property type="term" value="C:cytoplasm"/>
    <property type="evidence" value="ECO:0007669"/>
    <property type="project" value="UniProtKB-SubCell"/>
</dbReference>
<dbReference type="GO" id="GO:0005524">
    <property type="term" value="F:ATP binding"/>
    <property type="evidence" value="ECO:0007669"/>
    <property type="project" value="UniProtKB-UniRule"/>
</dbReference>
<dbReference type="GO" id="GO:0140662">
    <property type="term" value="F:ATP-dependent protein folding chaperone"/>
    <property type="evidence" value="ECO:0007669"/>
    <property type="project" value="InterPro"/>
</dbReference>
<dbReference type="GO" id="GO:0016853">
    <property type="term" value="F:isomerase activity"/>
    <property type="evidence" value="ECO:0007669"/>
    <property type="project" value="UniProtKB-KW"/>
</dbReference>
<dbReference type="GO" id="GO:0051082">
    <property type="term" value="F:unfolded protein binding"/>
    <property type="evidence" value="ECO:0007669"/>
    <property type="project" value="UniProtKB-UniRule"/>
</dbReference>
<dbReference type="GO" id="GO:0042026">
    <property type="term" value="P:protein refolding"/>
    <property type="evidence" value="ECO:0007669"/>
    <property type="project" value="UniProtKB-UniRule"/>
</dbReference>
<dbReference type="CDD" id="cd03344">
    <property type="entry name" value="GroEL"/>
    <property type="match status" value="1"/>
</dbReference>
<dbReference type="FunFam" id="1.10.560.10:FF:000001">
    <property type="entry name" value="60 kDa chaperonin"/>
    <property type="match status" value="1"/>
</dbReference>
<dbReference type="FunFam" id="3.50.7.10:FF:000001">
    <property type="entry name" value="60 kDa chaperonin"/>
    <property type="match status" value="1"/>
</dbReference>
<dbReference type="Gene3D" id="3.50.7.10">
    <property type="entry name" value="GroEL"/>
    <property type="match status" value="1"/>
</dbReference>
<dbReference type="Gene3D" id="1.10.560.10">
    <property type="entry name" value="GroEL-like equatorial domain"/>
    <property type="match status" value="1"/>
</dbReference>
<dbReference type="Gene3D" id="3.30.260.10">
    <property type="entry name" value="TCP-1-like chaperonin intermediate domain"/>
    <property type="match status" value="1"/>
</dbReference>
<dbReference type="HAMAP" id="MF_00600">
    <property type="entry name" value="CH60"/>
    <property type="match status" value="1"/>
</dbReference>
<dbReference type="InterPro" id="IPR018370">
    <property type="entry name" value="Chaperonin_Cpn60_CS"/>
</dbReference>
<dbReference type="InterPro" id="IPR001844">
    <property type="entry name" value="Cpn60/GroEL"/>
</dbReference>
<dbReference type="InterPro" id="IPR002423">
    <property type="entry name" value="Cpn60/GroEL/TCP-1"/>
</dbReference>
<dbReference type="InterPro" id="IPR027409">
    <property type="entry name" value="GroEL-like_apical_dom_sf"/>
</dbReference>
<dbReference type="InterPro" id="IPR027413">
    <property type="entry name" value="GROEL-like_equatorial_sf"/>
</dbReference>
<dbReference type="InterPro" id="IPR027410">
    <property type="entry name" value="TCP-1-like_intermed_sf"/>
</dbReference>
<dbReference type="NCBIfam" id="TIGR02348">
    <property type="entry name" value="GroEL"/>
    <property type="match status" value="1"/>
</dbReference>
<dbReference type="NCBIfam" id="NF000592">
    <property type="entry name" value="PRK00013.1"/>
    <property type="match status" value="1"/>
</dbReference>
<dbReference type="NCBIfam" id="NF009487">
    <property type="entry name" value="PRK12849.1"/>
    <property type="match status" value="1"/>
</dbReference>
<dbReference type="NCBIfam" id="NF009488">
    <property type="entry name" value="PRK12850.1"/>
    <property type="match status" value="1"/>
</dbReference>
<dbReference type="NCBIfam" id="NF009489">
    <property type="entry name" value="PRK12851.1"/>
    <property type="match status" value="1"/>
</dbReference>
<dbReference type="PANTHER" id="PTHR45633">
    <property type="entry name" value="60 KDA HEAT SHOCK PROTEIN, MITOCHONDRIAL"/>
    <property type="match status" value="1"/>
</dbReference>
<dbReference type="Pfam" id="PF00118">
    <property type="entry name" value="Cpn60_TCP1"/>
    <property type="match status" value="1"/>
</dbReference>
<dbReference type="PRINTS" id="PR00298">
    <property type="entry name" value="CHAPERONIN60"/>
</dbReference>
<dbReference type="SUPFAM" id="SSF52029">
    <property type="entry name" value="GroEL apical domain-like"/>
    <property type="match status" value="1"/>
</dbReference>
<dbReference type="SUPFAM" id="SSF48592">
    <property type="entry name" value="GroEL equatorial domain-like"/>
    <property type="match status" value="1"/>
</dbReference>
<dbReference type="SUPFAM" id="SSF54849">
    <property type="entry name" value="GroEL-intermediate domain like"/>
    <property type="match status" value="1"/>
</dbReference>
<dbReference type="PROSITE" id="PS00296">
    <property type="entry name" value="CHAPERONINS_CPN60"/>
    <property type="match status" value="1"/>
</dbReference>
<evidence type="ECO:0000255" key="1">
    <source>
        <dbReference type="HAMAP-Rule" id="MF_00600"/>
    </source>
</evidence>
<name>CH60_PSYCK</name>
<proteinExistence type="inferred from homology"/>
<keyword id="KW-0067">ATP-binding</keyword>
<keyword id="KW-0143">Chaperone</keyword>
<keyword id="KW-0963">Cytoplasm</keyword>
<keyword id="KW-0413">Isomerase</keyword>
<keyword id="KW-0547">Nucleotide-binding</keyword>
<reference key="1">
    <citation type="submission" date="2006-03" db="EMBL/GenBank/DDBJ databases">
        <title>Complete sequence of chromosome of Psychrobacter cryohalolentis K5.</title>
        <authorList>
            <consortium name="US DOE Joint Genome Institute"/>
            <person name="Copeland A."/>
            <person name="Lucas S."/>
            <person name="Lapidus A."/>
            <person name="Barry K."/>
            <person name="Detter J.C."/>
            <person name="Glavina T."/>
            <person name="Hammon N."/>
            <person name="Israni S."/>
            <person name="Dalin E."/>
            <person name="Tice H."/>
            <person name="Pitluck S."/>
            <person name="Brettin T."/>
            <person name="Bruce D."/>
            <person name="Han C."/>
            <person name="Tapia R."/>
            <person name="Sims D.R."/>
            <person name="Gilna P."/>
            <person name="Schmutz J."/>
            <person name="Larimer F."/>
            <person name="Land M."/>
            <person name="Hauser L."/>
            <person name="Kyrpides N."/>
            <person name="Kim E."/>
            <person name="Richardson P."/>
        </authorList>
    </citation>
    <scope>NUCLEOTIDE SEQUENCE [LARGE SCALE GENOMIC DNA]</scope>
    <source>
        <strain>ATCC BAA-1226 / DSM 17306 / VKM B-2378 / K5</strain>
    </source>
</reference>
<organism>
    <name type="scientific">Psychrobacter cryohalolentis (strain ATCC BAA-1226 / DSM 17306 / VKM B-2378 / K5)</name>
    <dbReference type="NCBI Taxonomy" id="335284"/>
    <lineage>
        <taxon>Bacteria</taxon>
        <taxon>Pseudomonadati</taxon>
        <taxon>Pseudomonadota</taxon>
        <taxon>Gammaproteobacteria</taxon>
        <taxon>Moraxellales</taxon>
        <taxon>Moraxellaceae</taxon>
        <taxon>Psychrobacter</taxon>
    </lineage>
</organism>
<feature type="chain" id="PRO_0000256955" description="Chaperonin GroEL">
    <location>
        <begin position="1"/>
        <end position="549"/>
    </location>
</feature>
<feature type="binding site" evidence="1">
    <location>
        <begin position="29"/>
        <end position="32"/>
    </location>
    <ligand>
        <name>ATP</name>
        <dbReference type="ChEBI" id="CHEBI:30616"/>
    </ligand>
</feature>
<feature type="binding site" evidence="1">
    <location>
        <position position="50"/>
    </location>
    <ligand>
        <name>ATP</name>
        <dbReference type="ChEBI" id="CHEBI:30616"/>
    </ligand>
</feature>
<feature type="binding site" evidence="1">
    <location>
        <begin position="86"/>
        <end position="90"/>
    </location>
    <ligand>
        <name>ATP</name>
        <dbReference type="ChEBI" id="CHEBI:30616"/>
    </ligand>
</feature>
<feature type="binding site" evidence="1">
    <location>
        <position position="414"/>
    </location>
    <ligand>
        <name>ATP</name>
        <dbReference type="ChEBI" id="CHEBI:30616"/>
    </ligand>
</feature>
<feature type="binding site" evidence="1">
    <location>
        <begin position="478"/>
        <end position="480"/>
    </location>
    <ligand>
        <name>ATP</name>
        <dbReference type="ChEBI" id="CHEBI:30616"/>
    </ligand>
</feature>
<feature type="binding site" evidence="1">
    <location>
        <position position="494"/>
    </location>
    <ligand>
        <name>ATP</name>
        <dbReference type="ChEBI" id="CHEBI:30616"/>
    </ligand>
</feature>
<gene>
    <name evidence="1" type="primary">groEL</name>
    <name evidence="1" type="synonym">groL</name>
    <name type="ordered locus">Pcryo_0541</name>
</gene>
<sequence>MAKDVKFGIDARKQMMDGVNVLANAVRVTLGPKGRNVVIDKSFGAPTITKDGVSVAKEIELENKFENMGAQLVREVASRTNDVAGDGTTTATVLAQSILQEGMKSVAAGMNPMDLKRGIDKAVRAAVEQIHLLSTPADDSKAIAQVGSISANSDTKIGELIAQAMEKVGKQGVITVEEGSSFEDTLEVVEGMQFDRGYISPYFANKQDSLTAEFENPYILLVDKKISNIREIVPLLEQVMQQSKPLLIIAEDVENEALATLVVNNMRGGLKTCAVKAPGFGDRRKAMLEDIATLTGGTVISEEIGLSLETATLEQLGTAKKVTVGKENTVIVDGAGNSADIENRVESIKRQVEESTSDYDKEKLQERMAKLAGGVAVIKVGAATETEMKEKKDRVDDALHATRAAVEEGVVPGGGVALVRAMNALSELRGDNDDQNAGINILRRAMEAPLRQIVTNSGEEASVVVNEVKSGTGNYGYNAASGEYGDMLEMGILDPAKVARSALENAASVAGLMLTTEVMITDLPQGDDGMAGMGGAGGMGGMGGMGGMM</sequence>
<comment type="function">
    <text evidence="1">Together with its co-chaperonin GroES, plays an essential role in assisting protein folding. The GroEL-GroES system forms a nano-cage that allows encapsulation of the non-native substrate proteins and provides a physical environment optimized to promote and accelerate protein folding.</text>
</comment>
<comment type="catalytic activity">
    <reaction evidence="1">
        <text>ATP + H2O + a folded polypeptide = ADP + phosphate + an unfolded polypeptide.</text>
        <dbReference type="EC" id="5.6.1.7"/>
    </reaction>
</comment>
<comment type="subunit">
    <text evidence="1">Forms a cylinder of 14 subunits composed of two heptameric rings stacked back-to-back. Interacts with the co-chaperonin GroES.</text>
</comment>
<comment type="subcellular location">
    <subcellularLocation>
        <location evidence="1">Cytoplasm</location>
    </subcellularLocation>
</comment>
<comment type="similarity">
    <text evidence="1">Belongs to the chaperonin (HSP60) family.</text>
</comment>